<proteinExistence type="inferred from homology"/>
<reference key="1">
    <citation type="journal article" date="2004" name="Proc. Natl. Acad. Sci. U.S.A.">
        <title>Insights into the evolution of Yersinia pestis through whole-genome comparison with Yersinia pseudotuberculosis.</title>
        <authorList>
            <person name="Chain P.S.G."/>
            <person name="Carniel E."/>
            <person name="Larimer F.W."/>
            <person name="Lamerdin J."/>
            <person name="Stoutland P.O."/>
            <person name="Regala W.M."/>
            <person name="Georgescu A.M."/>
            <person name="Vergez L.M."/>
            <person name="Land M.L."/>
            <person name="Motin V.L."/>
            <person name="Brubaker R.R."/>
            <person name="Fowler J."/>
            <person name="Hinnebusch J."/>
            <person name="Marceau M."/>
            <person name="Medigue C."/>
            <person name="Simonet M."/>
            <person name="Chenal-Francisque V."/>
            <person name="Souza B."/>
            <person name="Dacheux D."/>
            <person name="Elliott J.M."/>
            <person name="Derbise A."/>
            <person name="Hauser L.J."/>
            <person name="Garcia E."/>
        </authorList>
    </citation>
    <scope>NUCLEOTIDE SEQUENCE [LARGE SCALE GENOMIC DNA]</scope>
    <source>
        <strain>IP32953</strain>
    </source>
</reference>
<protein>
    <recommendedName>
        <fullName evidence="1">Regulatory protein RecX</fullName>
    </recommendedName>
</protein>
<feature type="chain" id="PRO_0000162500" description="Regulatory protein RecX">
    <location>
        <begin position="1"/>
        <end position="182"/>
    </location>
</feature>
<feature type="region of interest" description="Disordered" evidence="2">
    <location>
        <begin position="12"/>
        <end position="54"/>
    </location>
</feature>
<feature type="compositionally biased region" description="Basic and acidic residues" evidence="2">
    <location>
        <begin position="13"/>
        <end position="24"/>
    </location>
</feature>
<feature type="compositionally biased region" description="Polar residues" evidence="2">
    <location>
        <begin position="43"/>
        <end position="54"/>
    </location>
</feature>
<gene>
    <name evidence="1" type="primary">recX</name>
    <name type="ordered locus">YPTB0824</name>
</gene>
<accession>Q66E69</accession>
<organism>
    <name type="scientific">Yersinia pseudotuberculosis serotype I (strain IP32953)</name>
    <dbReference type="NCBI Taxonomy" id="273123"/>
    <lineage>
        <taxon>Bacteria</taxon>
        <taxon>Pseudomonadati</taxon>
        <taxon>Pseudomonadota</taxon>
        <taxon>Gammaproteobacteria</taxon>
        <taxon>Enterobacterales</taxon>
        <taxon>Yersiniaceae</taxon>
        <taxon>Yersinia</taxon>
    </lineage>
</organism>
<name>RECX_YERPS</name>
<evidence type="ECO:0000255" key="1">
    <source>
        <dbReference type="HAMAP-Rule" id="MF_01114"/>
    </source>
</evidence>
<evidence type="ECO:0000256" key="2">
    <source>
        <dbReference type="SAM" id="MobiDB-lite"/>
    </source>
</evidence>
<dbReference type="EMBL" id="BX936398">
    <property type="protein sequence ID" value="CAH20064.1"/>
    <property type="molecule type" value="Genomic_DNA"/>
</dbReference>
<dbReference type="RefSeq" id="WP_011191807.1">
    <property type="nucleotide sequence ID" value="NC_006155.1"/>
</dbReference>
<dbReference type="SMR" id="Q66E69"/>
<dbReference type="KEGG" id="ypo:BZ17_1732"/>
<dbReference type="KEGG" id="yps:YPTB0824"/>
<dbReference type="PATRIC" id="fig|273123.14.peg.1833"/>
<dbReference type="Proteomes" id="UP000001011">
    <property type="component" value="Chromosome"/>
</dbReference>
<dbReference type="GO" id="GO:0005737">
    <property type="term" value="C:cytoplasm"/>
    <property type="evidence" value="ECO:0007669"/>
    <property type="project" value="UniProtKB-SubCell"/>
</dbReference>
<dbReference type="GO" id="GO:0006282">
    <property type="term" value="P:regulation of DNA repair"/>
    <property type="evidence" value="ECO:0007669"/>
    <property type="project" value="UniProtKB-UniRule"/>
</dbReference>
<dbReference type="Gene3D" id="1.10.10.10">
    <property type="entry name" value="Winged helix-like DNA-binding domain superfamily/Winged helix DNA-binding domain"/>
    <property type="match status" value="3"/>
</dbReference>
<dbReference type="HAMAP" id="MF_01114">
    <property type="entry name" value="RecX"/>
    <property type="match status" value="1"/>
</dbReference>
<dbReference type="InterPro" id="IPR053924">
    <property type="entry name" value="RecX_HTH_2nd"/>
</dbReference>
<dbReference type="InterPro" id="IPR053925">
    <property type="entry name" value="RecX_HTH_3rd"/>
</dbReference>
<dbReference type="InterPro" id="IPR003783">
    <property type="entry name" value="Regulatory_RecX"/>
</dbReference>
<dbReference type="InterPro" id="IPR036388">
    <property type="entry name" value="WH-like_DNA-bd_sf"/>
</dbReference>
<dbReference type="NCBIfam" id="NF001053">
    <property type="entry name" value="PRK00117.1-3"/>
    <property type="match status" value="1"/>
</dbReference>
<dbReference type="PANTHER" id="PTHR33602">
    <property type="entry name" value="REGULATORY PROTEIN RECX FAMILY PROTEIN"/>
    <property type="match status" value="1"/>
</dbReference>
<dbReference type="PANTHER" id="PTHR33602:SF1">
    <property type="entry name" value="REGULATORY PROTEIN RECX FAMILY PROTEIN"/>
    <property type="match status" value="1"/>
</dbReference>
<dbReference type="Pfam" id="PF02631">
    <property type="entry name" value="RecX_HTH2"/>
    <property type="match status" value="1"/>
</dbReference>
<dbReference type="Pfam" id="PF21981">
    <property type="entry name" value="RecX_HTH3"/>
    <property type="match status" value="1"/>
</dbReference>
<comment type="function">
    <text evidence="1">Modulates RecA activity.</text>
</comment>
<comment type="subcellular location">
    <subcellularLocation>
        <location evidence="1">Cytoplasm</location>
    </subcellularLocation>
</comment>
<comment type="similarity">
    <text evidence="1">Belongs to the RecX family.</text>
</comment>
<sequence>MNDQLSRAMRLLSQRDHSESELRRKLAAPPFSAKGNWGKRSGAKSSNLVESNPVESNLAESNAIEESDPQVIEQVIDYCYQHNWLDDSRFAASYINSRSRKGYGVQRIRSELMQKGVDKERILAAFENSEIDWCQLAKEVAQRKFSETLPVEWKEKAKVQRYLLYRGFFQEEIQSIYTDSVE</sequence>
<keyword id="KW-0963">Cytoplasm</keyword>